<comment type="catalytic activity">
    <reaction>
        <text>1-(5-phospho-beta-D-ribosyl)-5-[(5-phospho-beta-D-ribosylamino)methylideneamino]imidazole-4-carboxamide = 5-[(5-phospho-1-deoxy-D-ribulos-1-ylimino)methylamino]-1-(5-phospho-beta-D-ribosyl)imidazole-4-carboxamide</text>
        <dbReference type="Rhea" id="RHEA:15469"/>
        <dbReference type="ChEBI" id="CHEBI:58435"/>
        <dbReference type="ChEBI" id="CHEBI:58525"/>
        <dbReference type="EC" id="5.3.1.16"/>
    </reaction>
</comment>
<comment type="pathway">
    <text>Amino-acid biosynthesis; L-histidine biosynthesis; L-histidine from 5-phospho-alpha-D-ribose 1-diphosphate: step 4/9.</text>
</comment>
<comment type="subcellular location">
    <subcellularLocation>
        <location evidence="1">Cytoplasm</location>
    </subcellularLocation>
</comment>
<comment type="similarity">
    <text evidence="2">Belongs to the HisA/HisF family.</text>
</comment>
<sequence length="245" mass="26647">MIIPALDLIEGKVVRLHQGDYGQQRDYGNHPLPRLQDYQQQGAQVLHLVDLTGAKDPAARQIPLLRELLAGVDVPVQVGGGIRNEQDVVALLEAGAARVVVGSTAVKQPEMVQQWFERYGAEAIVLALDVRINEAGCKHVAISGWQENSDATLEQIVEQYLPYGLKHVLCTDISRDGTLSGSNVELYQEVCQRYPQVAFQASGGIGCLDDIARLRGSGVQGVIVGRALLDGKFNVKEAIACWQNV</sequence>
<accession>Q8ZFX9</accession>
<accession>Q0WGM8</accession>
<name>HIS4_YERPE</name>
<proteinExistence type="inferred from homology"/>
<reference key="1">
    <citation type="journal article" date="2001" name="Nature">
        <title>Genome sequence of Yersinia pestis, the causative agent of plague.</title>
        <authorList>
            <person name="Parkhill J."/>
            <person name="Wren B.W."/>
            <person name="Thomson N.R."/>
            <person name="Titball R.W."/>
            <person name="Holden M.T.G."/>
            <person name="Prentice M.B."/>
            <person name="Sebaihia M."/>
            <person name="James K.D."/>
            <person name="Churcher C.M."/>
            <person name="Mungall K.L."/>
            <person name="Baker S."/>
            <person name="Basham D."/>
            <person name="Bentley S.D."/>
            <person name="Brooks K."/>
            <person name="Cerdeno-Tarraga A.-M."/>
            <person name="Chillingworth T."/>
            <person name="Cronin A."/>
            <person name="Davies R.M."/>
            <person name="Davis P."/>
            <person name="Dougan G."/>
            <person name="Feltwell T."/>
            <person name="Hamlin N."/>
            <person name="Holroyd S."/>
            <person name="Jagels K."/>
            <person name="Karlyshev A.V."/>
            <person name="Leather S."/>
            <person name="Moule S."/>
            <person name="Oyston P.C.F."/>
            <person name="Quail M.A."/>
            <person name="Rutherford K.M."/>
            <person name="Simmonds M."/>
            <person name="Skelton J."/>
            <person name="Stevens K."/>
            <person name="Whitehead S."/>
            <person name="Barrell B.G."/>
        </authorList>
    </citation>
    <scope>NUCLEOTIDE SEQUENCE [LARGE SCALE GENOMIC DNA]</scope>
    <source>
        <strain>CO-92 / Biovar Orientalis</strain>
    </source>
</reference>
<reference key="2">
    <citation type="journal article" date="2002" name="J. Bacteriol.">
        <title>Genome sequence of Yersinia pestis KIM.</title>
        <authorList>
            <person name="Deng W."/>
            <person name="Burland V."/>
            <person name="Plunkett G. III"/>
            <person name="Boutin A."/>
            <person name="Mayhew G.F."/>
            <person name="Liss P."/>
            <person name="Perna N.T."/>
            <person name="Rose D.J."/>
            <person name="Mau B."/>
            <person name="Zhou S."/>
            <person name="Schwartz D.C."/>
            <person name="Fetherston J.D."/>
            <person name="Lindler L.E."/>
            <person name="Brubaker R.R."/>
            <person name="Plano G.V."/>
            <person name="Straley S.C."/>
            <person name="McDonough K.A."/>
            <person name="Nilles M.L."/>
            <person name="Matson J.S."/>
            <person name="Blattner F.R."/>
            <person name="Perry R.D."/>
        </authorList>
    </citation>
    <scope>NUCLEOTIDE SEQUENCE [LARGE SCALE GENOMIC DNA]</scope>
    <source>
        <strain>KIM10+ / Biovar Mediaevalis</strain>
    </source>
</reference>
<reference key="3">
    <citation type="journal article" date="2004" name="DNA Res.">
        <title>Complete genome sequence of Yersinia pestis strain 91001, an isolate avirulent to humans.</title>
        <authorList>
            <person name="Song Y."/>
            <person name="Tong Z."/>
            <person name="Wang J."/>
            <person name="Wang L."/>
            <person name="Guo Z."/>
            <person name="Han Y."/>
            <person name="Zhang J."/>
            <person name="Pei D."/>
            <person name="Zhou D."/>
            <person name="Qin H."/>
            <person name="Pang X."/>
            <person name="Han Y."/>
            <person name="Zhai J."/>
            <person name="Li M."/>
            <person name="Cui B."/>
            <person name="Qi Z."/>
            <person name="Jin L."/>
            <person name="Dai R."/>
            <person name="Chen F."/>
            <person name="Li S."/>
            <person name="Ye C."/>
            <person name="Du Z."/>
            <person name="Lin W."/>
            <person name="Wang J."/>
            <person name="Yu J."/>
            <person name="Yang H."/>
            <person name="Wang J."/>
            <person name="Huang P."/>
            <person name="Yang R."/>
        </authorList>
    </citation>
    <scope>NUCLEOTIDE SEQUENCE [LARGE SCALE GENOMIC DNA]</scope>
    <source>
        <strain>91001 / Biovar Mediaevalis</strain>
    </source>
</reference>
<dbReference type="EC" id="5.3.1.16"/>
<dbReference type="EMBL" id="AL590842">
    <property type="protein sequence ID" value="CAL20190.1"/>
    <property type="molecule type" value="Genomic_DNA"/>
</dbReference>
<dbReference type="EMBL" id="AE009952">
    <property type="protein sequence ID" value="AAM86180.1"/>
    <property type="molecule type" value="Genomic_DNA"/>
</dbReference>
<dbReference type="EMBL" id="AE017042">
    <property type="protein sequence ID" value="AAS61674.1"/>
    <property type="molecule type" value="Genomic_DNA"/>
</dbReference>
<dbReference type="PIR" id="AD0188">
    <property type="entry name" value="AD0188"/>
</dbReference>
<dbReference type="RefSeq" id="WP_002211891.1">
    <property type="nucleotide sequence ID" value="NZ_WUCM01000031.1"/>
</dbReference>
<dbReference type="RefSeq" id="YP_002346560.1">
    <property type="nucleotide sequence ID" value="NC_003143.1"/>
</dbReference>
<dbReference type="SMR" id="Q8ZFX9"/>
<dbReference type="STRING" id="214092.YPO1544"/>
<dbReference type="PaxDb" id="214092-YPO1544"/>
<dbReference type="DNASU" id="1147573"/>
<dbReference type="EnsemblBacteria" id="AAS61674">
    <property type="protein sequence ID" value="AAS61674"/>
    <property type="gene ID" value="YP_1433"/>
</dbReference>
<dbReference type="GeneID" id="96665163"/>
<dbReference type="KEGG" id="ype:YPO1544"/>
<dbReference type="KEGG" id="ypk:y2626"/>
<dbReference type="KEGG" id="ypm:YP_1433"/>
<dbReference type="PATRIC" id="fig|214092.21.peg.1881"/>
<dbReference type="eggNOG" id="COG0106">
    <property type="taxonomic scope" value="Bacteria"/>
</dbReference>
<dbReference type="HOGENOM" id="CLU_048577_1_2_6"/>
<dbReference type="OMA" id="EWLHLVD"/>
<dbReference type="OrthoDB" id="9807749at2"/>
<dbReference type="UniPathway" id="UPA00031">
    <property type="reaction ID" value="UER00009"/>
</dbReference>
<dbReference type="Proteomes" id="UP000000815">
    <property type="component" value="Chromosome"/>
</dbReference>
<dbReference type="Proteomes" id="UP000001019">
    <property type="component" value="Chromosome"/>
</dbReference>
<dbReference type="Proteomes" id="UP000002490">
    <property type="component" value="Chromosome"/>
</dbReference>
<dbReference type="GO" id="GO:0005737">
    <property type="term" value="C:cytoplasm"/>
    <property type="evidence" value="ECO:0000318"/>
    <property type="project" value="GO_Central"/>
</dbReference>
<dbReference type="GO" id="GO:0003949">
    <property type="term" value="F:1-(5-phosphoribosyl)-5-[(5-phosphoribosylamino)methylideneamino]imidazole-4-carboxamide isomerase activity"/>
    <property type="evidence" value="ECO:0000318"/>
    <property type="project" value="GO_Central"/>
</dbReference>
<dbReference type="GO" id="GO:0000105">
    <property type="term" value="P:L-histidine biosynthetic process"/>
    <property type="evidence" value="ECO:0000318"/>
    <property type="project" value="GO_Central"/>
</dbReference>
<dbReference type="CDD" id="cd04732">
    <property type="entry name" value="HisA"/>
    <property type="match status" value="1"/>
</dbReference>
<dbReference type="FunFam" id="3.20.20.70:FF:000009">
    <property type="entry name" value="1-(5-phosphoribosyl)-5-[(5-phosphoribosylamino)methylideneamino] imidazole-4-carboxamide isomerase"/>
    <property type="match status" value="1"/>
</dbReference>
<dbReference type="Gene3D" id="3.20.20.70">
    <property type="entry name" value="Aldolase class I"/>
    <property type="match status" value="1"/>
</dbReference>
<dbReference type="HAMAP" id="MF_01014">
    <property type="entry name" value="HisA"/>
    <property type="match status" value="1"/>
</dbReference>
<dbReference type="InterPro" id="IPR013785">
    <property type="entry name" value="Aldolase_TIM"/>
</dbReference>
<dbReference type="InterPro" id="IPR006062">
    <property type="entry name" value="His_biosynth"/>
</dbReference>
<dbReference type="InterPro" id="IPR006063">
    <property type="entry name" value="HisA_bact_arch"/>
</dbReference>
<dbReference type="InterPro" id="IPR044524">
    <property type="entry name" value="Isoase_HisA-like"/>
</dbReference>
<dbReference type="InterPro" id="IPR023016">
    <property type="entry name" value="Isoase_HisA-like_bact"/>
</dbReference>
<dbReference type="InterPro" id="IPR011060">
    <property type="entry name" value="RibuloseP-bd_barrel"/>
</dbReference>
<dbReference type="NCBIfam" id="TIGR00007">
    <property type="entry name" value="1-(5-phosphoribosyl)-5-[(5-phosphoribosylamino)methylideneamino]imidazole-4-carboxamide isomerase"/>
    <property type="match status" value="1"/>
</dbReference>
<dbReference type="PANTHER" id="PTHR43090">
    <property type="entry name" value="1-(5-PHOSPHORIBOSYL)-5-[(5-PHOSPHORIBOSYLAMINO)METHYLIDENEAMINO] IMIDAZOLE-4-CARBOXAMIDE ISOMERASE"/>
    <property type="match status" value="1"/>
</dbReference>
<dbReference type="PANTHER" id="PTHR43090:SF2">
    <property type="entry name" value="1-(5-PHOSPHORIBOSYL)-5-[(5-PHOSPHORIBOSYLAMINO)METHYLIDENEAMINO] IMIDAZOLE-4-CARBOXAMIDE ISOMERASE"/>
    <property type="match status" value="1"/>
</dbReference>
<dbReference type="Pfam" id="PF00977">
    <property type="entry name" value="His_biosynth"/>
    <property type="match status" value="1"/>
</dbReference>
<dbReference type="SUPFAM" id="SSF51366">
    <property type="entry name" value="Ribulose-phoshate binding barrel"/>
    <property type="match status" value="1"/>
</dbReference>
<protein>
    <recommendedName>
        <fullName>1-(5-phosphoribosyl)-5-[(5-phosphoribosylamino)methylideneamino] imidazole-4-carboxamide isomerase</fullName>
        <ecNumber>5.3.1.16</ecNumber>
    </recommendedName>
    <alternativeName>
        <fullName>Phosphoribosylformimino-5-aminoimidazole carboxamide ribotide isomerase</fullName>
    </alternativeName>
</protein>
<evidence type="ECO:0000250" key="1"/>
<evidence type="ECO:0000305" key="2"/>
<gene>
    <name type="primary">hisA</name>
    <name type="ordered locus">YPO1544</name>
    <name type="ordered locus">y2626</name>
    <name type="ordered locus">YP_1433</name>
</gene>
<organism>
    <name type="scientific">Yersinia pestis</name>
    <dbReference type="NCBI Taxonomy" id="632"/>
    <lineage>
        <taxon>Bacteria</taxon>
        <taxon>Pseudomonadati</taxon>
        <taxon>Pseudomonadota</taxon>
        <taxon>Gammaproteobacteria</taxon>
        <taxon>Enterobacterales</taxon>
        <taxon>Yersiniaceae</taxon>
        <taxon>Yersinia</taxon>
    </lineage>
</organism>
<feature type="chain" id="PRO_0000142080" description="1-(5-phosphoribosyl)-5-[(5-phosphoribosylamino)methylideneamino] imidazole-4-carboxamide isomerase">
    <location>
        <begin position="1"/>
        <end position="245"/>
    </location>
</feature>
<feature type="active site" description="Proton acceptor" evidence="1">
    <location>
        <position position="7"/>
    </location>
</feature>
<feature type="active site" description="Proton donor" evidence="1">
    <location>
        <position position="129"/>
    </location>
</feature>
<feature type="sequence conflict" description="In Ref. 3; AAS61674." evidence="2" ref="3">
    <original>A</original>
    <variation>P</variation>
    <location>
        <position position="240"/>
    </location>
</feature>
<keyword id="KW-0028">Amino-acid biosynthesis</keyword>
<keyword id="KW-0963">Cytoplasm</keyword>
<keyword id="KW-0368">Histidine biosynthesis</keyword>
<keyword id="KW-0413">Isomerase</keyword>
<keyword id="KW-1185">Reference proteome</keyword>